<organism>
    <name type="scientific">Saccharomyces cerevisiae (strain ATCC 204508 / S288c)</name>
    <name type="common">Baker's yeast</name>
    <dbReference type="NCBI Taxonomy" id="559292"/>
    <lineage>
        <taxon>Eukaryota</taxon>
        <taxon>Fungi</taxon>
        <taxon>Dikarya</taxon>
        <taxon>Ascomycota</taxon>
        <taxon>Saccharomycotina</taxon>
        <taxon>Saccharomycetes</taxon>
        <taxon>Saccharomycetales</taxon>
        <taxon>Saccharomycetaceae</taxon>
        <taxon>Saccharomyces</taxon>
    </lineage>
</organism>
<gene>
    <name type="ordered locus">YOR073W-A</name>
    <name type="ORF">smORF601</name>
</gene>
<proteinExistence type="uncertain"/>
<comment type="miscellaneous">
    <text evidence="1">Partially overlaps CDC21.</text>
</comment>
<comment type="caution">
    <text evidence="2">Product of a dubious gene prediction unlikely to encode a functional protein. Because of that it is not part of the S.cerevisiae S288c complete/reference proteome set.</text>
</comment>
<dbReference type="EMBL" id="Z70678">
    <property type="status" value="NOT_ANNOTATED_CDS"/>
    <property type="molecule type" value="Genomic_DNA"/>
</dbReference>
<dbReference type="EMBL" id="Z74982">
    <property type="status" value="NOT_ANNOTATED_CDS"/>
    <property type="molecule type" value="Genomic_DNA"/>
</dbReference>
<dbReference type="STRING" id="4932.YOR073W-A"/>
<dbReference type="PaxDb" id="4932-YOR073W-A"/>
<dbReference type="EnsemblFungi" id="YOR073W-A_mRNA">
    <property type="protein sequence ID" value="YOR073W-A"/>
    <property type="gene ID" value="YOR073W-A"/>
</dbReference>
<dbReference type="AGR" id="SGD:S000028583"/>
<dbReference type="SGD" id="S000028583">
    <property type="gene designation" value="YOR073W-A"/>
</dbReference>
<dbReference type="HOGENOM" id="CLU_2639478_0_0_1"/>
<feature type="chain" id="PRO_0000309061" description="Putative uncharacterized protein YOR073W-A">
    <location>
        <begin position="1"/>
        <end position="77"/>
    </location>
</feature>
<evidence type="ECO:0000305" key="1"/>
<evidence type="ECO:0000305" key="2">
    <source>
    </source>
</evidence>
<accession>P0C5R3</accession>
<name>YO73A_YEAST</name>
<sequence length="77" mass="8506">MIPLVKTFLVVSSGKVSSRKLKRSWGGAKRLNVPVPVLSGLNSPSSMILLHRSRYCSSSLFFPSIVILYRSVMKLSP</sequence>
<reference key="1">
    <citation type="journal article" date="1997" name="Yeast">
        <title>The sequence of a 54.7 kb fragment of yeast chromosome XV reveals the presence of two tRNAs and 24 new open reading frames.</title>
        <authorList>
            <person name="Valens M."/>
            <person name="Bohn C."/>
            <person name="Daignan-Fornier B."/>
            <person name="Dang V.-D."/>
            <person name="Bolotin-Fukuhara M."/>
        </authorList>
    </citation>
    <scope>NUCLEOTIDE SEQUENCE [GENOMIC DNA]</scope>
</reference>
<reference key="2">
    <citation type="journal article" date="1997" name="Nature">
        <title>The nucleotide sequence of Saccharomyces cerevisiae chromosome XV.</title>
        <authorList>
            <person name="Dujon B."/>
            <person name="Albermann K."/>
            <person name="Aldea M."/>
            <person name="Alexandraki D."/>
            <person name="Ansorge W."/>
            <person name="Arino J."/>
            <person name="Benes V."/>
            <person name="Bohn C."/>
            <person name="Bolotin-Fukuhara M."/>
            <person name="Bordonne R."/>
            <person name="Boyer J."/>
            <person name="Camasses A."/>
            <person name="Casamayor A."/>
            <person name="Casas C."/>
            <person name="Cheret G."/>
            <person name="Cziepluch C."/>
            <person name="Daignan-Fornier B."/>
            <person name="Dang V.-D."/>
            <person name="de Haan M."/>
            <person name="Delius H."/>
            <person name="Durand P."/>
            <person name="Fairhead C."/>
            <person name="Feldmann H."/>
            <person name="Gaillon L."/>
            <person name="Galisson F."/>
            <person name="Gamo F.-J."/>
            <person name="Gancedo C."/>
            <person name="Goffeau A."/>
            <person name="Goulding S.E."/>
            <person name="Grivell L.A."/>
            <person name="Habbig B."/>
            <person name="Hand N.J."/>
            <person name="Hani J."/>
            <person name="Hattenhorst U."/>
            <person name="Hebling U."/>
            <person name="Hernando Y."/>
            <person name="Herrero E."/>
            <person name="Heumann K."/>
            <person name="Hiesel R."/>
            <person name="Hilger F."/>
            <person name="Hofmann B."/>
            <person name="Hollenberg C.P."/>
            <person name="Hughes B."/>
            <person name="Jauniaux J.-C."/>
            <person name="Kalogeropoulos A."/>
            <person name="Katsoulou C."/>
            <person name="Kordes E."/>
            <person name="Lafuente M.J."/>
            <person name="Landt O."/>
            <person name="Louis E.J."/>
            <person name="Maarse A.C."/>
            <person name="Madania A."/>
            <person name="Mannhaupt G."/>
            <person name="Marck C."/>
            <person name="Martin R.P."/>
            <person name="Mewes H.-W."/>
            <person name="Michaux G."/>
            <person name="Paces V."/>
            <person name="Parle-McDermott A.G."/>
            <person name="Pearson B.M."/>
            <person name="Perrin A."/>
            <person name="Pettersson B."/>
            <person name="Poch O."/>
            <person name="Pohl T.M."/>
            <person name="Poirey R."/>
            <person name="Portetelle D."/>
            <person name="Pujol A."/>
            <person name="Purnelle B."/>
            <person name="Ramezani Rad M."/>
            <person name="Rechmann S."/>
            <person name="Schwager C."/>
            <person name="Schweizer M."/>
            <person name="Sor F."/>
            <person name="Sterky F."/>
            <person name="Tarassov I.A."/>
            <person name="Teodoru C."/>
            <person name="Tettelin H."/>
            <person name="Thierry A."/>
            <person name="Tobiasch E."/>
            <person name="Tzermia M."/>
            <person name="Uhlen M."/>
            <person name="Unseld M."/>
            <person name="Valens M."/>
            <person name="Vandenbol M."/>
            <person name="Vetter I."/>
            <person name="Vlcek C."/>
            <person name="Voet M."/>
            <person name="Volckaert G."/>
            <person name="Voss H."/>
            <person name="Wambutt R."/>
            <person name="Wedler H."/>
            <person name="Wiemann S."/>
            <person name="Winsor B."/>
            <person name="Wolfe K.H."/>
            <person name="Zollner A."/>
            <person name="Zumstein E."/>
            <person name="Kleine K."/>
        </authorList>
    </citation>
    <scope>NUCLEOTIDE SEQUENCE [LARGE SCALE GENOMIC DNA]</scope>
    <source>
        <strain>ATCC 204508 / S288c</strain>
    </source>
</reference>
<reference key="3">
    <citation type="journal article" date="2014" name="G3 (Bethesda)">
        <title>The reference genome sequence of Saccharomyces cerevisiae: Then and now.</title>
        <authorList>
            <person name="Engel S.R."/>
            <person name="Dietrich F.S."/>
            <person name="Fisk D.G."/>
            <person name="Binkley G."/>
            <person name="Balakrishnan R."/>
            <person name="Costanzo M.C."/>
            <person name="Dwight S.S."/>
            <person name="Hitz B.C."/>
            <person name="Karra K."/>
            <person name="Nash R.S."/>
            <person name="Weng S."/>
            <person name="Wong E.D."/>
            <person name="Lloyd P."/>
            <person name="Skrzypek M.S."/>
            <person name="Miyasato S.R."/>
            <person name="Simison M."/>
            <person name="Cherry J.M."/>
        </authorList>
    </citation>
    <scope>GENOME REANNOTATION</scope>
    <source>
        <strain>ATCC 204508 / S288c</strain>
    </source>
</reference>
<reference key="4">
    <citation type="journal article" date="2003" name="Genome Res.">
        <title>Systematic discovery of new genes in the Saccharomyces cerevisiae genome.</title>
        <authorList>
            <person name="Kessler M.M."/>
            <person name="Zeng Q."/>
            <person name="Hogan S."/>
            <person name="Cook R."/>
            <person name="Morales A.J."/>
            <person name="Cottarel G."/>
        </authorList>
    </citation>
    <scope>GENOME REANNOTATION</scope>
</reference>
<protein>
    <recommendedName>
        <fullName>Putative uncharacterized protein YOR073W-A</fullName>
    </recommendedName>
</protein>